<dbReference type="EC" id="2.5.1.145" evidence="1"/>
<dbReference type="EMBL" id="CP000082">
    <property type="protein sequence ID" value="AAZ19857.1"/>
    <property type="molecule type" value="Genomic_DNA"/>
</dbReference>
<dbReference type="RefSeq" id="WP_011281265.1">
    <property type="nucleotide sequence ID" value="NC_007204.1"/>
</dbReference>
<dbReference type="SMR" id="Q4FQ51"/>
<dbReference type="STRING" id="259536.Psyc_2010"/>
<dbReference type="KEGG" id="par:Psyc_2010"/>
<dbReference type="eggNOG" id="COG0682">
    <property type="taxonomic scope" value="Bacteria"/>
</dbReference>
<dbReference type="HOGENOM" id="CLU_013386_1_0_6"/>
<dbReference type="OrthoDB" id="871140at2"/>
<dbReference type="UniPathway" id="UPA00664"/>
<dbReference type="Proteomes" id="UP000000546">
    <property type="component" value="Chromosome"/>
</dbReference>
<dbReference type="GO" id="GO:0005886">
    <property type="term" value="C:plasma membrane"/>
    <property type="evidence" value="ECO:0007669"/>
    <property type="project" value="UniProtKB-SubCell"/>
</dbReference>
<dbReference type="GO" id="GO:0008961">
    <property type="term" value="F:phosphatidylglycerol-prolipoprotein diacylglyceryl transferase activity"/>
    <property type="evidence" value="ECO:0007669"/>
    <property type="project" value="UniProtKB-UniRule"/>
</dbReference>
<dbReference type="GO" id="GO:0042158">
    <property type="term" value="P:lipoprotein biosynthetic process"/>
    <property type="evidence" value="ECO:0007669"/>
    <property type="project" value="UniProtKB-UniRule"/>
</dbReference>
<dbReference type="HAMAP" id="MF_01147">
    <property type="entry name" value="Lgt"/>
    <property type="match status" value="1"/>
</dbReference>
<dbReference type="InterPro" id="IPR001640">
    <property type="entry name" value="Lgt"/>
</dbReference>
<dbReference type="NCBIfam" id="TIGR00544">
    <property type="entry name" value="lgt"/>
    <property type="match status" value="1"/>
</dbReference>
<dbReference type="PANTHER" id="PTHR30589:SF0">
    <property type="entry name" value="PHOSPHATIDYLGLYCEROL--PROLIPOPROTEIN DIACYLGLYCERYL TRANSFERASE"/>
    <property type="match status" value="1"/>
</dbReference>
<dbReference type="PANTHER" id="PTHR30589">
    <property type="entry name" value="PROLIPOPROTEIN DIACYLGLYCERYL TRANSFERASE"/>
    <property type="match status" value="1"/>
</dbReference>
<dbReference type="Pfam" id="PF01790">
    <property type="entry name" value="LGT"/>
    <property type="match status" value="1"/>
</dbReference>
<dbReference type="PROSITE" id="PS01311">
    <property type="entry name" value="LGT"/>
    <property type="match status" value="1"/>
</dbReference>
<name>LGT_PSYA2</name>
<gene>
    <name evidence="1" type="primary">lgt</name>
    <name type="ordered locus">Psyc_2010</name>
</gene>
<organism>
    <name type="scientific">Psychrobacter arcticus (strain DSM 17307 / VKM B-2377 / 273-4)</name>
    <dbReference type="NCBI Taxonomy" id="259536"/>
    <lineage>
        <taxon>Bacteria</taxon>
        <taxon>Pseudomonadati</taxon>
        <taxon>Pseudomonadota</taxon>
        <taxon>Gammaproteobacteria</taxon>
        <taxon>Moraxellales</taxon>
        <taxon>Moraxellaceae</taxon>
        <taxon>Psychrobacter</taxon>
    </lineage>
</organism>
<reference key="1">
    <citation type="journal article" date="2010" name="Appl. Environ. Microbiol.">
        <title>The genome sequence of Psychrobacter arcticus 273-4, a psychroactive Siberian permafrost bacterium, reveals mechanisms for adaptation to low-temperature growth.</title>
        <authorList>
            <person name="Ayala-del-Rio H.L."/>
            <person name="Chain P.S."/>
            <person name="Grzymski J.J."/>
            <person name="Ponder M.A."/>
            <person name="Ivanova N."/>
            <person name="Bergholz P.W."/>
            <person name="Di Bartolo G."/>
            <person name="Hauser L."/>
            <person name="Land M."/>
            <person name="Bakermans C."/>
            <person name="Rodrigues D."/>
            <person name="Klappenbach J."/>
            <person name="Zarka D."/>
            <person name="Larimer F."/>
            <person name="Richardson P."/>
            <person name="Murray A."/>
            <person name="Thomashow M."/>
            <person name="Tiedje J.M."/>
        </authorList>
    </citation>
    <scope>NUCLEOTIDE SEQUENCE [LARGE SCALE GENOMIC DNA]</scope>
    <source>
        <strain>DSM 17307 / VKM B-2377 / 273-4</strain>
    </source>
</reference>
<proteinExistence type="inferred from homology"/>
<feature type="chain" id="PRO_1000053481" description="Phosphatidylglycerol--prolipoprotein diacylglyceryl transferase">
    <location>
        <begin position="1"/>
        <end position="294"/>
    </location>
</feature>
<feature type="transmembrane region" description="Helical" evidence="1">
    <location>
        <begin position="10"/>
        <end position="30"/>
    </location>
</feature>
<feature type="transmembrane region" description="Helical" evidence="1">
    <location>
        <begin position="55"/>
        <end position="75"/>
    </location>
</feature>
<feature type="transmembrane region" description="Helical" evidence="1">
    <location>
        <begin position="91"/>
        <end position="111"/>
    </location>
</feature>
<feature type="transmembrane region" description="Helical" evidence="1">
    <location>
        <begin position="119"/>
        <end position="139"/>
    </location>
</feature>
<feature type="transmembrane region" description="Helical" evidence="1">
    <location>
        <begin position="196"/>
        <end position="216"/>
    </location>
</feature>
<feature type="transmembrane region" description="Helical" evidence="1">
    <location>
        <begin position="224"/>
        <end position="244"/>
    </location>
</feature>
<feature type="transmembrane region" description="Helical" evidence="1">
    <location>
        <begin position="258"/>
        <end position="278"/>
    </location>
</feature>
<feature type="binding site" evidence="1">
    <location>
        <position position="138"/>
    </location>
    <ligand>
        <name>a 1,2-diacyl-sn-glycero-3-phospho-(1'-sn-glycerol)</name>
        <dbReference type="ChEBI" id="CHEBI:64716"/>
    </ligand>
</feature>
<evidence type="ECO:0000255" key="1">
    <source>
        <dbReference type="HAMAP-Rule" id="MF_01147"/>
    </source>
</evidence>
<comment type="function">
    <text evidence="1">Catalyzes the transfer of the diacylglyceryl group from phosphatidylglycerol to the sulfhydryl group of the N-terminal cysteine of a prolipoprotein, the first step in the formation of mature lipoproteins.</text>
</comment>
<comment type="catalytic activity">
    <reaction evidence="1">
        <text>L-cysteinyl-[prolipoprotein] + a 1,2-diacyl-sn-glycero-3-phospho-(1'-sn-glycerol) = an S-1,2-diacyl-sn-glyceryl-L-cysteinyl-[prolipoprotein] + sn-glycerol 1-phosphate + H(+)</text>
        <dbReference type="Rhea" id="RHEA:56712"/>
        <dbReference type="Rhea" id="RHEA-COMP:14679"/>
        <dbReference type="Rhea" id="RHEA-COMP:14680"/>
        <dbReference type="ChEBI" id="CHEBI:15378"/>
        <dbReference type="ChEBI" id="CHEBI:29950"/>
        <dbReference type="ChEBI" id="CHEBI:57685"/>
        <dbReference type="ChEBI" id="CHEBI:64716"/>
        <dbReference type="ChEBI" id="CHEBI:140658"/>
        <dbReference type="EC" id="2.5.1.145"/>
    </reaction>
</comment>
<comment type="pathway">
    <text evidence="1">Protein modification; lipoprotein biosynthesis (diacylglyceryl transfer).</text>
</comment>
<comment type="subcellular location">
    <subcellularLocation>
        <location evidence="1">Cell inner membrane</location>
        <topology evidence="1">Multi-pass membrane protein</topology>
    </subcellularLocation>
</comment>
<comment type="similarity">
    <text evidence="1">Belongs to the Lgt family.</text>
</comment>
<protein>
    <recommendedName>
        <fullName evidence="1">Phosphatidylglycerol--prolipoprotein diacylglyceryl transferase</fullName>
        <ecNumber evidence="1">2.5.1.145</ecNumber>
    </recommendedName>
</protein>
<keyword id="KW-0997">Cell inner membrane</keyword>
<keyword id="KW-1003">Cell membrane</keyword>
<keyword id="KW-0472">Membrane</keyword>
<keyword id="KW-1185">Reference proteome</keyword>
<keyword id="KW-0808">Transferase</keyword>
<keyword id="KW-0812">Transmembrane</keyword>
<keyword id="KW-1133">Transmembrane helix</keyword>
<sequence>MMIHPQYDPVALALGPIEIHWYGLMYLLAFATAYGLAWYRSSKRDNWTTDMVSDLVFYGALGVILGGRIGYVLFYQFGELVQNPAYLLKVWEGGMSFHGGFIGVMLGMWFFARKYKKTAFQVFDFIVPCVPTGLLFGRIGNYINGELWGRVSDGGYNWLTYFPQAAAFDMEQLQSNPQLQELIIEVNGQYVLPRHPSQLYEAFAEGLLLFIFLWWYSSKPRPRMAASAVFLLGYGISRFIIEFFRQPDVDQGFILLGWMTKGQLLSAPMIIAGLIMLIYAYKRGIYDWGKQAAY</sequence>
<accession>Q4FQ51</accession>